<proteinExistence type="inferred from homology"/>
<feature type="chain" id="PRO_1000128920" description="Small ribosomal subunit protein eS24">
    <location>
        <begin position="1"/>
        <end position="98"/>
    </location>
</feature>
<protein>
    <recommendedName>
        <fullName evidence="1">Small ribosomal subunit protein eS24</fullName>
    </recommendedName>
    <alternativeName>
        <fullName evidence="2">30S ribosomal protein S24e</fullName>
    </alternativeName>
</protein>
<gene>
    <name evidence="1" type="primary">rps24e</name>
    <name type="ordered locus">TON_1910</name>
</gene>
<reference key="1">
    <citation type="journal article" date="2008" name="J. Bacteriol.">
        <title>The complete genome sequence of Thermococcus onnurineus NA1 reveals a mixed heterotrophic and carboxydotrophic metabolism.</title>
        <authorList>
            <person name="Lee H.S."/>
            <person name="Kang S.G."/>
            <person name="Bae S.S."/>
            <person name="Lim J.K."/>
            <person name="Cho Y."/>
            <person name="Kim Y.J."/>
            <person name="Jeon J.H."/>
            <person name="Cha S.-S."/>
            <person name="Kwon K.K."/>
            <person name="Kim H.-T."/>
            <person name="Park C.-J."/>
            <person name="Lee H.-W."/>
            <person name="Kim S.I."/>
            <person name="Chun J."/>
            <person name="Colwell R.R."/>
            <person name="Kim S.-J."/>
            <person name="Lee J.-H."/>
        </authorList>
    </citation>
    <scope>NUCLEOTIDE SEQUENCE [LARGE SCALE GENOMIC DNA]</scope>
    <source>
        <strain>NA1</strain>
    </source>
</reference>
<accession>B6YW35</accession>
<evidence type="ECO:0000255" key="1">
    <source>
        <dbReference type="HAMAP-Rule" id="MF_00545"/>
    </source>
</evidence>
<evidence type="ECO:0000305" key="2"/>
<name>RS24_THEON</name>
<keyword id="KW-0687">Ribonucleoprotein</keyword>
<keyword id="KW-0689">Ribosomal protein</keyword>
<comment type="similarity">
    <text evidence="1">Belongs to the eukaryotic ribosomal protein eS24 family.</text>
</comment>
<organism>
    <name type="scientific">Thermococcus onnurineus (strain NA1)</name>
    <dbReference type="NCBI Taxonomy" id="523850"/>
    <lineage>
        <taxon>Archaea</taxon>
        <taxon>Methanobacteriati</taxon>
        <taxon>Methanobacteriota</taxon>
        <taxon>Thermococci</taxon>
        <taxon>Thermococcales</taxon>
        <taxon>Thermococcaceae</taxon>
        <taxon>Thermococcus</taxon>
    </lineage>
</organism>
<dbReference type="EMBL" id="CP000855">
    <property type="protein sequence ID" value="ACJ17401.1"/>
    <property type="molecule type" value="Genomic_DNA"/>
</dbReference>
<dbReference type="RefSeq" id="WP_012572873.1">
    <property type="nucleotide sequence ID" value="NC_011529.1"/>
</dbReference>
<dbReference type="SMR" id="B6YW35"/>
<dbReference type="STRING" id="523850.TON_1910"/>
<dbReference type="GeneID" id="7017582"/>
<dbReference type="KEGG" id="ton:TON_1910"/>
<dbReference type="PATRIC" id="fig|523850.10.peg.1925"/>
<dbReference type="eggNOG" id="arCOG04182">
    <property type="taxonomic scope" value="Archaea"/>
</dbReference>
<dbReference type="HOGENOM" id="CLU_107248_3_2_2"/>
<dbReference type="OrthoDB" id="27533at2157"/>
<dbReference type="Proteomes" id="UP000002727">
    <property type="component" value="Chromosome"/>
</dbReference>
<dbReference type="GO" id="GO:1990904">
    <property type="term" value="C:ribonucleoprotein complex"/>
    <property type="evidence" value="ECO:0007669"/>
    <property type="project" value="UniProtKB-KW"/>
</dbReference>
<dbReference type="GO" id="GO:0005840">
    <property type="term" value="C:ribosome"/>
    <property type="evidence" value="ECO:0007669"/>
    <property type="project" value="UniProtKB-KW"/>
</dbReference>
<dbReference type="GO" id="GO:0003735">
    <property type="term" value="F:structural constituent of ribosome"/>
    <property type="evidence" value="ECO:0007669"/>
    <property type="project" value="InterPro"/>
</dbReference>
<dbReference type="GO" id="GO:0006412">
    <property type="term" value="P:translation"/>
    <property type="evidence" value="ECO:0007669"/>
    <property type="project" value="UniProtKB-UniRule"/>
</dbReference>
<dbReference type="Gene3D" id="3.30.70.330">
    <property type="match status" value="1"/>
</dbReference>
<dbReference type="HAMAP" id="MF_00545">
    <property type="entry name" value="Ribosomal_eS24"/>
    <property type="match status" value="1"/>
</dbReference>
<dbReference type="InterPro" id="IPR012677">
    <property type="entry name" value="Nucleotide-bd_a/b_plait_sf"/>
</dbReference>
<dbReference type="InterPro" id="IPR001976">
    <property type="entry name" value="Ribosomal_eS24"/>
</dbReference>
<dbReference type="InterPro" id="IPR018098">
    <property type="entry name" value="Ribosomal_eS24_CS"/>
</dbReference>
<dbReference type="InterPro" id="IPR012678">
    <property type="entry name" value="Ribosomal_uL23/eL15/eS24_sf"/>
</dbReference>
<dbReference type="PANTHER" id="PTHR10496">
    <property type="entry name" value="40S RIBOSOMAL PROTEIN S24"/>
    <property type="match status" value="1"/>
</dbReference>
<dbReference type="Pfam" id="PF01282">
    <property type="entry name" value="Ribosomal_S24e"/>
    <property type="match status" value="1"/>
</dbReference>
<dbReference type="SUPFAM" id="SSF54189">
    <property type="entry name" value="Ribosomal proteins S24e, L23 and L15e"/>
    <property type="match status" value="1"/>
</dbReference>
<dbReference type="PROSITE" id="PS00529">
    <property type="entry name" value="RIBOSOMAL_S24E"/>
    <property type="match status" value="1"/>
</dbReference>
<sequence>MEIKVTEIKENKLLGRKEIYFDVIHEGEPTPSRKDVKGKLVAMLDLDPETTVLQYIKSYFGSRVSKGYAKAYESKERMLYIEPEYILVRDGIITKEEE</sequence>